<protein>
    <recommendedName>
        <fullName>Serine/threonine-protein kinase hippo</fullName>
        <ecNumber>2.7.11.1</ecNumber>
    </recommendedName>
    <alternativeName>
        <fullName>Drosophila homolog of MST1 and MST2</fullName>
    </alternativeName>
    <alternativeName>
        <fullName>STE20-like kinase MST</fullName>
    </alternativeName>
    <alternativeName>
        <fullName>dMST</fullName>
    </alternativeName>
</protein>
<organism>
    <name type="scientific">Drosophila melanogaster</name>
    <name type="common">Fruit fly</name>
    <dbReference type="NCBI Taxonomy" id="7227"/>
    <lineage>
        <taxon>Eukaryota</taxon>
        <taxon>Metazoa</taxon>
        <taxon>Ecdysozoa</taxon>
        <taxon>Arthropoda</taxon>
        <taxon>Hexapoda</taxon>
        <taxon>Insecta</taxon>
        <taxon>Pterygota</taxon>
        <taxon>Neoptera</taxon>
        <taxon>Endopterygota</taxon>
        <taxon>Diptera</taxon>
        <taxon>Brachycera</taxon>
        <taxon>Muscomorpha</taxon>
        <taxon>Ephydroidea</taxon>
        <taxon>Drosophilidae</taxon>
        <taxon>Drosophila</taxon>
        <taxon>Sophophora</taxon>
    </lineage>
</organism>
<reference key="1">
    <citation type="journal article" date="2003" name="Cell">
        <title>The Drosophila Mst ortholog, hippo, restricts growth and cell proliferation and promotes apoptosis.</title>
        <authorList>
            <person name="Harvey K.F."/>
            <person name="Pfleger C.M."/>
            <person name="Hariharan I.K."/>
        </authorList>
    </citation>
    <scope>NUCLEOTIDE SEQUENCE [GENOMIC DNA]</scope>
    <scope>FUNCTION</scope>
    <scope>TISSUE SPECIFICITY</scope>
    <scope>INTERACTION WITH SAV AND WTS</scope>
</reference>
<reference key="2">
    <citation type="journal article" date="2000" name="Science">
        <title>The genome sequence of Drosophila melanogaster.</title>
        <authorList>
            <person name="Adams M.D."/>
            <person name="Celniker S.E."/>
            <person name="Holt R.A."/>
            <person name="Evans C.A."/>
            <person name="Gocayne J.D."/>
            <person name="Amanatides P.G."/>
            <person name="Scherer S.E."/>
            <person name="Li P.W."/>
            <person name="Hoskins R.A."/>
            <person name="Galle R.F."/>
            <person name="George R.A."/>
            <person name="Lewis S.E."/>
            <person name="Richards S."/>
            <person name="Ashburner M."/>
            <person name="Henderson S.N."/>
            <person name="Sutton G.G."/>
            <person name="Wortman J.R."/>
            <person name="Yandell M.D."/>
            <person name="Zhang Q."/>
            <person name="Chen L.X."/>
            <person name="Brandon R.C."/>
            <person name="Rogers Y.-H.C."/>
            <person name="Blazej R.G."/>
            <person name="Champe M."/>
            <person name="Pfeiffer B.D."/>
            <person name="Wan K.H."/>
            <person name="Doyle C."/>
            <person name="Baxter E.G."/>
            <person name="Helt G."/>
            <person name="Nelson C.R."/>
            <person name="Miklos G.L.G."/>
            <person name="Abril J.F."/>
            <person name="Agbayani A."/>
            <person name="An H.-J."/>
            <person name="Andrews-Pfannkoch C."/>
            <person name="Baldwin D."/>
            <person name="Ballew R.M."/>
            <person name="Basu A."/>
            <person name="Baxendale J."/>
            <person name="Bayraktaroglu L."/>
            <person name="Beasley E.M."/>
            <person name="Beeson K.Y."/>
            <person name="Benos P.V."/>
            <person name="Berman B.P."/>
            <person name="Bhandari D."/>
            <person name="Bolshakov S."/>
            <person name="Borkova D."/>
            <person name="Botchan M.R."/>
            <person name="Bouck J."/>
            <person name="Brokstein P."/>
            <person name="Brottier P."/>
            <person name="Burtis K.C."/>
            <person name="Busam D.A."/>
            <person name="Butler H."/>
            <person name="Cadieu E."/>
            <person name="Center A."/>
            <person name="Chandra I."/>
            <person name="Cherry J.M."/>
            <person name="Cawley S."/>
            <person name="Dahlke C."/>
            <person name="Davenport L.B."/>
            <person name="Davies P."/>
            <person name="de Pablos B."/>
            <person name="Delcher A."/>
            <person name="Deng Z."/>
            <person name="Mays A.D."/>
            <person name="Dew I."/>
            <person name="Dietz S.M."/>
            <person name="Dodson K."/>
            <person name="Doup L.E."/>
            <person name="Downes M."/>
            <person name="Dugan-Rocha S."/>
            <person name="Dunkov B.C."/>
            <person name="Dunn P."/>
            <person name="Durbin K.J."/>
            <person name="Evangelista C.C."/>
            <person name="Ferraz C."/>
            <person name="Ferriera S."/>
            <person name="Fleischmann W."/>
            <person name="Fosler C."/>
            <person name="Gabrielian A.E."/>
            <person name="Garg N.S."/>
            <person name="Gelbart W.M."/>
            <person name="Glasser K."/>
            <person name="Glodek A."/>
            <person name="Gong F."/>
            <person name="Gorrell J.H."/>
            <person name="Gu Z."/>
            <person name="Guan P."/>
            <person name="Harris M."/>
            <person name="Harris N.L."/>
            <person name="Harvey D.A."/>
            <person name="Heiman T.J."/>
            <person name="Hernandez J.R."/>
            <person name="Houck J."/>
            <person name="Hostin D."/>
            <person name="Houston K.A."/>
            <person name="Howland T.J."/>
            <person name="Wei M.-H."/>
            <person name="Ibegwam C."/>
            <person name="Jalali M."/>
            <person name="Kalush F."/>
            <person name="Karpen G.H."/>
            <person name="Ke Z."/>
            <person name="Kennison J.A."/>
            <person name="Ketchum K.A."/>
            <person name="Kimmel B.E."/>
            <person name="Kodira C.D."/>
            <person name="Kraft C.L."/>
            <person name="Kravitz S."/>
            <person name="Kulp D."/>
            <person name="Lai Z."/>
            <person name="Lasko P."/>
            <person name="Lei Y."/>
            <person name="Levitsky A.A."/>
            <person name="Li J.H."/>
            <person name="Li Z."/>
            <person name="Liang Y."/>
            <person name="Lin X."/>
            <person name="Liu X."/>
            <person name="Mattei B."/>
            <person name="McIntosh T.C."/>
            <person name="McLeod M.P."/>
            <person name="McPherson D."/>
            <person name="Merkulov G."/>
            <person name="Milshina N.V."/>
            <person name="Mobarry C."/>
            <person name="Morris J."/>
            <person name="Moshrefi A."/>
            <person name="Mount S.M."/>
            <person name="Moy M."/>
            <person name="Murphy B."/>
            <person name="Murphy L."/>
            <person name="Muzny D.M."/>
            <person name="Nelson D.L."/>
            <person name="Nelson D.R."/>
            <person name="Nelson K.A."/>
            <person name="Nixon K."/>
            <person name="Nusskern D.R."/>
            <person name="Pacleb J.M."/>
            <person name="Palazzolo M."/>
            <person name="Pittman G.S."/>
            <person name="Pan S."/>
            <person name="Pollard J."/>
            <person name="Puri V."/>
            <person name="Reese M.G."/>
            <person name="Reinert K."/>
            <person name="Remington K."/>
            <person name="Saunders R.D.C."/>
            <person name="Scheeler F."/>
            <person name="Shen H."/>
            <person name="Shue B.C."/>
            <person name="Siden-Kiamos I."/>
            <person name="Simpson M."/>
            <person name="Skupski M.P."/>
            <person name="Smith T.J."/>
            <person name="Spier E."/>
            <person name="Spradling A.C."/>
            <person name="Stapleton M."/>
            <person name="Strong R."/>
            <person name="Sun E."/>
            <person name="Svirskas R."/>
            <person name="Tector C."/>
            <person name="Turner R."/>
            <person name="Venter E."/>
            <person name="Wang A.H."/>
            <person name="Wang X."/>
            <person name="Wang Z.-Y."/>
            <person name="Wassarman D.A."/>
            <person name="Weinstock G.M."/>
            <person name="Weissenbach J."/>
            <person name="Williams S.M."/>
            <person name="Woodage T."/>
            <person name="Worley K.C."/>
            <person name="Wu D."/>
            <person name="Yang S."/>
            <person name="Yao Q.A."/>
            <person name="Ye J."/>
            <person name="Yeh R.-F."/>
            <person name="Zaveri J.S."/>
            <person name="Zhan M."/>
            <person name="Zhang G."/>
            <person name="Zhao Q."/>
            <person name="Zheng L."/>
            <person name="Zheng X.H."/>
            <person name="Zhong F.N."/>
            <person name="Zhong W."/>
            <person name="Zhou X."/>
            <person name="Zhu S.C."/>
            <person name="Zhu X."/>
            <person name="Smith H.O."/>
            <person name="Gibbs R.A."/>
            <person name="Myers E.W."/>
            <person name="Rubin G.M."/>
            <person name="Venter J.C."/>
        </authorList>
    </citation>
    <scope>NUCLEOTIDE SEQUENCE [LARGE SCALE GENOMIC DNA]</scope>
    <source>
        <strain>Berkeley</strain>
    </source>
</reference>
<reference key="3">
    <citation type="journal article" date="2002" name="Genome Biol.">
        <title>Annotation of the Drosophila melanogaster euchromatic genome: a systematic review.</title>
        <authorList>
            <person name="Misra S."/>
            <person name="Crosby M.A."/>
            <person name="Mungall C.J."/>
            <person name="Matthews B.B."/>
            <person name="Campbell K.S."/>
            <person name="Hradecky P."/>
            <person name="Huang Y."/>
            <person name="Kaminker J.S."/>
            <person name="Millburn G.H."/>
            <person name="Prochnik S.E."/>
            <person name="Smith C.D."/>
            <person name="Tupy J.L."/>
            <person name="Whitfield E.J."/>
            <person name="Bayraktaroglu L."/>
            <person name="Berman B.P."/>
            <person name="Bettencourt B.R."/>
            <person name="Celniker S.E."/>
            <person name="de Grey A.D.N.J."/>
            <person name="Drysdale R.A."/>
            <person name="Harris N.L."/>
            <person name="Richter J."/>
            <person name="Russo S."/>
            <person name="Schroeder A.J."/>
            <person name="Shu S.Q."/>
            <person name="Stapleton M."/>
            <person name="Yamada C."/>
            <person name="Ashburner M."/>
            <person name="Gelbart W.M."/>
            <person name="Rubin G.M."/>
            <person name="Lewis S.E."/>
        </authorList>
    </citation>
    <scope>GENOME REANNOTATION</scope>
    <source>
        <strain>Berkeley</strain>
    </source>
</reference>
<reference key="4">
    <citation type="journal article" date="2002" name="Genome Biol.">
        <title>A Drosophila full-length cDNA resource.</title>
        <authorList>
            <person name="Stapleton M."/>
            <person name="Carlson J.W."/>
            <person name="Brokstein P."/>
            <person name="Yu C."/>
            <person name="Champe M."/>
            <person name="George R.A."/>
            <person name="Guarin H."/>
            <person name="Kronmiller B."/>
            <person name="Pacleb J.M."/>
            <person name="Park S."/>
            <person name="Wan K.H."/>
            <person name="Rubin G.M."/>
            <person name="Celniker S.E."/>
        </authorList>
    </citation>
    <scope>NUCLEOTIDE SEQUENCE [LARGE SCALE MRNA]</scope>
    <source>
        <strain>Berkeley</strain>
        <tissue>Head</tissue>
    </source>
</reference>
<reference key="5">
    <citation type="journal article" date="2002" name="Mech. Dev.">
        <title>Identification of novel Drosophila neural precursor genes using a differential embryonic head cDNA screen.</title>
        <authorList>
            <person name="Brody T."/>
            <person name="Stivers C."/>
            <person name="Nagle J."/>
            <person name="Odenwald W.F."/>
        </authorList>
    </citation>
    <scope>TISSUE SPECIFICITY</scope>
</reference>
<reference key="6">
    <citation type="journal article" date="2002" name="Development">
        <title>Gliogenesis in Drosophila: genome-wide analysis of downstream genes of glial cells missing in the embryonic nervous system.</title>
        <authorList>
            <person name="Egger B."/>
            <person name="Leemans R."/>
            <person name="Loop T."/>
            <person name="Kammermeier L."/>
            <person name="Fan Y."/>
            <person name="Radimerski T."/>
            <person name="Strahm M.C."/>
            <person name="Certa U."/>
            <person name="Reichert H."/>
        </authorList>
    </citation>
    <scope>INDUCTION</scope>
</reference>
<reference key="7">
    <citation type="journal article" date="2003" name="Cell">
        <title>hippo encodes a Ste-20 family protein kinase that restricts cell proliferation and promotes apoptosis in conjunction with salvador and warts.</title>
        <authorList>
            <person name="Wu S."/>
            <person name="Huang J."/>
            <person name="Dong J."/>
            <person name="Pan D."/>
        </authorList>
    </citation>
    <scope>FUNCTION IN PHOSPHORYLATION OF SAV AND WTS</scope>
    <scope>MUTANT HPO42-47</scope>
    <scope>MUTAGENESIS OF LYS-71</scope>
</reference>
<reference key="8">
    <citation type="journal article" date="2003" name="Genes Dev.">
        <title>The Drosophila Ste20 family kinase dMST functions as a tumor suppressor by restricting cell proliferation and promoting apoptosis.</title>
        <authorList>
            <person name="Jia J."/>
            <person name="Zhang W."/>
            <person name="Wang B."/>
            <person name="Trinko R."/>
            <person name="Jiang J."/>
        </authorList>
    </citation>
    <scope>FUNCTION</scope>
    <scope>INTERACTION WITH SAV AND WTS</scope>
</reference>
<reference key="9">
    <citation type="journal article" date="2003" name="Nat. Cell Biol.">
        <title>Hippo promotes proliferation arrest and apoptosis in the Salvador/Warts pathway.</title>
        <authorList>
            <person name="Udan R.S."/>
            <person name="Kango-Singh M."/>
            <person name="Nolo R."/>
            <person name="Tao C."/>
            <person name="Halder G."/>
        </authorList>
    </citation>
    <scope>FUNCTION</scope>
    <scope>HOMODIMERIZATION</scope>
    <scope>INTERACTION WITH SAV</scope>
</reference>
<reference key="10">
    <citation type="journal article" date="2003" name="Nat. Cell Biol.">
        <title>The Salvador partner Hippo promotes apoptosis and cell-cycle exit in Drosophila.</title>
        <authorList>
            <person name="Pantalacci S."/>
            <person name="Tapon N."/>
            <person name="Leopold P."/>
        </authorList>
    </citation>
    <scope>FUNCTION</scope>
    <scope>AUTOPHOSPHORYLATION</scope>
    <scope>INTERACTION WITH SAV</scope>
</reference>
<reference key="11">
    <citation type="journal article" date="2008" name="J. Proteome Res.">
        <title>Phosphoproteome analysis of Drosophila melanogaster embryos.</title>
        <authorList>
            <person name="Zhai B."/>
            <person name="Villen J."/>
            <person name="Beausoleil S.A."/>
            <person name="Mintseris J."/>
            <person name="Gygi S.P."/>
        </authorList>
    </citation>
    <scope>PHOSPHORYLATION [LARGE SCALE ANALYSIS] AT SER-30 AND SER-33</scope>
    <scope>IDENTIFICATION BY MASS SPECTROMETRY</scope>
    <source>
        <tissue>Embryo</tissue>
    </source>
</reference>
<reference key="12">
    <citation type="journal article" date="2010" name="Dev. Cell">
        <title>Kibra functions as a tumor suppressor protein that regulates Hippo signaling in conjunction with Merlin and Expanded.</title>
        <authorList>
            <person name="Yu J."/>
            <person name="Zheng Y."/>
            <person name="Dong J."/>
            <person name="Klusza S."/>
            <person name="Deng W.-M."/>
            <person name="Pan D."/>
        </authorList>
    </citation>
    <scope>SUBCELLULAR LOCATION</scope>
    <scope>INTERACTION WITH KIBRA; EX AND SAV</scope>
</reference>
<reference key="13">
    <citation type="journal article" date="2011" name="Dev. Cell">
        <title>Tao-1 phosphorylates Hippo/MST kinases to regulate the Hippo-Salvador-Warts tumor suppressor pathway.</title>
        <authorList>
            <person name="Boggiano J.C."/>
            <person name="Vanderzalm P.J."/>
            <person name="Fehon R.G."/>
        </authorList>
    </citation>
    <scope>PHOSPHORYLATION AT THR-195</scope>
    <scope>MUTAGENESIS OF THR-195</scope>
</reference>
<reference key="14">
    <citation type="journal article" date="2016" name="Dev. Cell">
        <title>Drosophila Schip1 links Expanded and Tao-1 to regulate hippo signaling.</title>
        <authorList>
            <person name="Chung H.L."/>
            <person name="Augustine G.J."/>
            <person name="Choi K.W."/>
        </authorList>
    </citation>
    <scope>SUBCELLULAR LOCATION</scope>
</reference>
<accession>Q8T0S6</accession>
<accession>Q9V8W4</accession>
<name>HIPPO_DROME</name>
<keyword id="KW-0002">3D-structure</keyword>
<keyword id="KW-0053">Apoptosis</keyword>
<keyword id="KW-0067">ATP-binding</keyword>
<keyword id="KW-1003">Cell membrane</keyword>
<keyword id="KW-0963">Cytoplasm</keyword>
<keyword id="KW-0418">Kinase</keyword>
<keyword id="KW-0472">Membrane</keyword>
<keyword id="KW-0547">Nucleotide-binding</keyword>
<keyword id="KW-0597">Phosphoprotein</keyword>
<keyword id="KW-1185">Reference proteome</keyword>
<keyword id="KW-0723">Serine/threonine-protein kinase</keyword>
<keyword id="KW-0808">Transferase</keyword>
<comment type="function">
    <text evidence="6 7 8 9 10">Plays a key role in the Hippo/SWH (Sav/Wts/Hpo) signaling pathway, a signaling pathway that plays a pivotal role in organ size control and tumor suppression by restricting proliferation and promoting apoptosis. The core of this pathway is composed of a kinase cascade wherein Hippo (Hpo), in complex with its regulatory protein Salvador (Sav), phosphorylates and activates Warts (Wts) in complex with its regulatory protein Mats, which in turn phosphorylates and inactivates the Yorkie (Yki) oncoprotein. The Hippo/SWH signaling pathway inhibits the activity of the transcriptional complex formed by Scalloped (sd) and Yki and the target genes of this pathway include cyclin-E (cycE), diap1 and bantam. Phosphorylates Sav, Wts and Th/DIAP1. Regulates the level of Th/DIAP1 apoptosis inhibitor.</text>
</comment>
<comment type="catalytic activity">
    <reaction>
        <text>L-seryl-[protein] + ATP = O-phospho-L-seryl-[protein] + ADP + H(+)</text>
        <dbReference type="Rhea" id="RHEA:17989"/>
        <dbReference type="Rhea" id="RHEA-COMP:9863"/>
        <dbReference type="Rhea" id="RHEA-COMP:11604"/>
        <dbReference type="ChEBI" id="CHEBI:15378"/>
        <dbReference type="ChEBI" id="CHEBI:29999"/>
        <dbReference type="ChEBI" id="CHEBI:30616"/>
        <dbReference type="ChEBI" id="CHEBI:83421"/>
        <dbReference type="ChEBI" id="CHEBI:456216"/>
        <dbReference type="EC" id="2.7.11.1"/>
    </reaction>
</comment>
<comment type="catalytic activity">
    <reaction>
        <text>L-threonyl-[protein] + ATP = O-phospho-L-threonyl-[protein] + ADP + H(+)</text>
        <dbReference type="Rhea" id="RHEA:46608"/>
        <dbReference type="Rhea" id="RHEA-COMP:11060"/>
        <dbReference type="Rhea" id="RHEA-COMP:11605"/>
        <dbReference type="ChEBI" id="CHEBI:15378"/>
        <dbReference type="ChEBI" id="CHEBI:30013"/>
        <dbReference type="ChEBI" id="CHEBI:30616"/>
        <dbReference type="ChEBI" id="CHEBI:61977"/>
        <dbReference type="ChEBI" id="CHEBI:456216"/>
        <dbReference type="EC" id="2.7.11.1"/>
    </reaction>
</comment>
<comment type="subunit">
    <text evidence="7 8 9 10 12">Homodimer. Interacts with Sav and Wts. Interacts (via SARAH domain) with Ex. Interacts with Kibra.</text>
</comment>
<comment type="interaction">
    <interactant intactId="EBI-101858">
        <id>Q8T0S6</id>
    </interactant>
    <interactant intactId="EBI-143689">
        <id>Q95RA8</id>
        <label>mats</label>
    </interactant>
    <organismsDiffer>false</organismsDiffer>
    <experiments>2</experiments>
</comment>
<comment type="interaction">
    <interactant intactId="EBI-101858">
        <id>Q8T0S6</id>
    </interactant>
    <interactant intactId="EBI-3415099">
        <id>Q6NPA6</id>
        <label>par-1</label>
    </interactant>
    <organismsDiffer>false</organismsDiffer>
    <experiments>2</experiments>
</comment>
<comment type="interaction">
    <interactant intactId="EBI-101858">
        <id>Q8T0S6</id>
    </interactant>
    <interactant intactId="EBI-145004">
        <id>Q9VCR6</id>
        <label>sav</label>
    </interactant>
    <organismsDiffer>false</organismsDiffer>
    <experiments>3</experiments>
</comment>
<comment type="interaction">
    <interactant intactId="EBI-101858">
        <id>Q8T0S6</id>
    </interactant>
    <interactant intactId="EBI-15596484">
        <id>Q9NBK5-2</id>
        <label>trc</label>
    </interactant>
    <organismsDiffer>false</organismsDiffer>
    <experiments>2</experiments>
</comment>
<comment type="subcellular location">
    <subcellularLocation>
        <location evidence="12 14">Apical cell membrane</location>
    </subcellularLocation>
    <subcellularLocation>
        <location evidence="14">Cytoplasm</location>
    </subcellularLocation>
</comment>
<comment type="tissue specificity">
    <text evidence="4 7">Expressed in CNS during embryogenesis. In third instar larvae, it is expressed throughout all imaginal disks.</text>
</comment>
<comment type="induction">
    <text evidence="5">Transcriptionally regulated by Gcm (Glial cells missing).</text>
</comment>
<comment type="PTM">
    <text evidence="11">Autophosphorylated.</text>
</comment>
<comment type="similarity">
    <text evidence="15">Belongs to the protein kinase superfamily. STE Ser/Thr protein kinase family. STE20 subfamily.</text>
</comment>
<evidence type="ECO:0000255" key="1">
    <source>
        <dbReference type="PROSITE-ProRule" id="PRU00159"/>
    </source>
</evidence>
<evidence type="ECO:0000255" key="2">
    <source>
        <dbReference type="PROSITE-ProRule" id="PRU00310"/>
    </source>
</evidence>
<evidence type="ECO:0000256" key="3">
    <source>
        <dbReference type="SAM" id="MobiDB-lite"/>
    </source>
</evidence>
<evidence type="ECO:0000269" key="4">
    <source>
    </source>
</evidence>
<evidence type="ECO:0000269" key="5">
    <source>
    </source>
</evidence>
<evidence type="ECO:0000269" key="6">
    <source>
    </source>
</evidence>
<evidence type="ECO:0000269" key="7">
    <source>
    </source>
</evidence>
<evidence type="ECO:0000269" key="8">
    <source>
    </source>
</evidence>
<evidence type="ECO:0000269" key="9">
    <source>
    </source>
</evidence>
<evidence type="ECO:0000269" key="10">
    <source>
    </source>
</evidence>
<evidence type="ECO:0000269" key="11">
    <source>
    </source>
</evidence>
<evidence type="ECO:0000269" key="12">
    <source>
    </source>
</evidence>
<evidence type="ECO:0000269" key="13">
    <source>
    </source>
</evidence>
<evidence type="ECO:0000269" key="14">
    <source>
    </source>
</evidence>
<evidence type="ECO:0000305" key="15"/>
<evidence type="ECO:0007829" key="16">
    <source>
        <dbReference type="PDB" id="6BN1"/>
    </source>
</evidence>
<dbReference type="EC" id="2.7.11.1"/>
<dbReference type="EMBL" id="AE013599">
    <property type="protein sequence ID" value="AAF57543.2"/>
    <property type="molecule type" value="Genomic_DNA"/>
</dbReference>
<dbReference type="EMBL" id="AY069088">
    <property type="protein sequence ID" value="AAL39233.1"/>
    <property type="molecule type" value="mRNA"/>
</dbReference>
<dbReference type="RefSeq" id="NP_001261092.1">
    <property type="nucleotide sequence ID" value="NM_001274163.1"/>
</dbReference>
<dbReference type="RefSeq" id="NP_611427.1">
    <property type="nucleotide sequence ID" value="NM_137583.5"/>
</dbReference>
<dbReference type="PDB" id="6BN1">
    <property type="method" value="X-ray"/>
    <property type="resolution" value="2.60 A"/>
    <property type="chains" value="A=606-662"/>
</dbReference>
<dbReference type="PDBsum" id="6BN1"/>
<dbReference type="SMR" id="Q8T0S6"/>
<dbReference type="BioGRID" id="62905">
    <property type="interactions" value="100"/>
</dbReference>
<dbReference type="DIP" id="DIP-17921N"/>
<dbReference type="FunCoup" id="Q8T0S6">
    <property type="interactions" value="1389"/>
</dbReference>
<dbReference type="IntAct" id="Q8T0S6">
    <property type="interactions" value="16"/>
</dbReference>
<dbReference type="MINT" id="Q8T0S6"/>
<dbReference type="STRING" id="7227.FBpp0304253"/>
<dbReference type="iPTMnet" id="Q8T0S6"/>
<dbReference type="PaxDb" id="7227-FBpp0304253"/>
<dbReference type="DNASU" id="37247"/>
<dbReference type="EnsemblMetazoa" id="FBtr0086500">
    <property type="protein sequence ID" value="FBpp0085688"/>
    <property type="gene ID" value="FBgn0261456"/>
</dbReference>
<dbReference type="EnsemblMetazoa" id="FBtr0331920">
    <property type="protein sequence ID" value="FBpp0304253"/>
    <property type="gene ID" value="FBgn0261456"/>
</dbReference>
<dbReference type="GeneID" id="37247"/>
<dbReference type="KEGG" id="dme:Dmel_CG11228"/>
<dbReference type="UCSC" id="CG11228-RA">
    <property type="organism name" value="d. melanogaster"/>
</dbReference>
<dbReference type="AGR" id="FB:FBgn0261456"/>
<dbReference type="CTD" id="37247"/>
<dbReference type="FlyBase" id="FBgn0261456">
    <property type="gene designation" value="hpo"/>
</dbReference>
<dbReference type="VEuPathDB" id="VectorBase:FBgn0261456"/>
<dbReference type="eggNOG" id="KOG0574">
    <property type="taxonomic scope" value="Eukaryota"/>
</dbReference>
<dbReference type="GeneTree" id="ENSGT00940000154984"/>
<dbReference type="HOGENOM" id="CLU_000288_63_23_1"/>
<dbReference type="InParanoid" id="Q8T0S6"/>
<dbReference type="OMA" id="LNQISHP"/>
<dbReference type="OrthoDB" id="8693905at2759"/>
<dbReference type="PhylomeDB" id="Q8T0S6"/>
<dbReference type="Reactome" id="R-DME-2028269">
    <property type="pathway name" value="Signaling by Hippo"/>
</dbReference>
<dbReference type="Reactome" id="R-DME-390089">
    <property type="pathway name" value="Formation of the Hippo kinase cassette"/>
</dbReference>
<dbReference type="Reactome" id="R-DME-390098">
    <property type="pathway name" value="Phosphorylation-dependent inhibition of YKI"/>
</dbReference>
<dbReference type="Reactome" id="R-DME-390150">
    <property type="pathway name" value="DS ligand bound to FT receptor"/>
</dbReference>
<dbReference type="Reactome" id="R-DME-451806">
    <property type="pathway name" value="Phosphorylation-independent inhibition of YKI"/>
</dbReference>
<dbReference type="SignaLink" id="Q8T0S6"/>
<dbReference type="BioGRID-ORCS" id="37247">
    <property type="hits" value="0 hits in 3 CRISPR screens"/>
</dbReference>
<dbReference type="CD-CODE" id="2838EF58">
    <property type="entry name" value="Centrosome"/>
</dbReference>
<dbReference type="CD-CODE" id="5A1E8F84">
    <property type="entry name" value="Signalosome"/>
</dbReference>
<dbReference type="GenomeRNAi" id="37247"/>
<dbReference type="PRO" id="PR:Q8T0S6"/>
<dbReference type="Proteomes" id="UP000000803">
    <property type="component" value="Chromosome 2R"/>
</dbReference>
<dbReference type="Bgee" id="FBgn0261456">
    <property type="expression patterns" value="Expressed in wing disc and 76 other cell types or tissues"/>
</dbReference>
<dbReference type="ExpressionAtlas" id="Q8T0S6">
    <property type="expression patterns" value="baseline and differential"/>
</dbReference>
<dbReference type="GO" id="GO:0016324">
    <property type="term" value="C:apical plasma membrane"/>
    <property type="evidence" value="ECO:0007669"/>
    <property type="project" value="UniProtKB-SubCell"/>
</dbReference>
<dbReference type="GO" id="GO:0106037">
    <property type="term" value="C:apicomedial cortex"/>
    <property type="evidence" value="ECO:0000314"/>
    <property type="project" value="FlyBase"/>
</dbReference>
<dbReference type="GO" id="GO:0005737">
    <property type="term" value="C:cytoplasm"/>
    <property type="evidence" value="ECO:0000318"/>
    <property type="project" value="GO_Central"/>
</dbReference>
<dbReference type="GO" id="GO:0005829">
    <property type="term" value="C:cytosol"/>
    <property type="evidence" value="ECO:0000314"/>
    <property type="project" value="FlyBase"/>
</dbReference>
<dbReference type="GO" id="GO:0016020">
    <property type="term" value="C:membrane"/>
    <property type="evidence" value="ECO:0000314"/>
    <property type="project" value="UniProtKB"/>
</dbReference>
<dbReference type="GO" id="GO:0005524">
    <property type="term" value="F:ATP binding"/>
    <property type="evidence" value="ECO:0007669"/>
    <property type="project" value="UniProtKB-KW"/>
</dbReference>
<dbReference type="GO" id="GO:0106310">
    <property type="term" value="F:protein serine kinase activity"/>
    <property type="evidence" value="ECO:0007669"/>
    <property type="project" value="RHEA"/>
</dbReference>
<dbReference type="GO" id="GO:0004674">
    <property type="term" value="F:protein serine/threonine kinase activity"/>
    <property type="evidence" value="ECO:0000314"/>
    <property type="project" value="UniProtKB"/>
</dbReference>
<dbReference type="GO" id="GO:0007298">
    <property type="term" value="P:border follicle cell migration"/>
    <property type="evidence" value="ECO:0000315"/>
    <property type="project" value="FlyBase"/>
</dbReference>
<dbReference type="GO" id="GO:0001745">
    <property type="term" value="P:compound eye morphogenesis"/>
    <property type="evidence" value="ECO:0000315"/>
    <property type="project" value="FlyBase"/>
</dbReference>
<dbReference type="GO" id="GO:0001654">
    <property type="term" value="P:eye development"/>
    <property type="evidence" value="ECO:0000315"/>
    <property type="project" value="FlyBase"/>
</dbReference>
<dbReference type="GO" id="GO:0035329">
    <property type="term" value="P:hippo signaling"/>
    <property type="evidence" value="ECO:0000314"/>
    <property type="project" value="FlyBase"/>
</dbReference>
<dbReference type="GO" id="GO:0035556">
    <property type="term" value="P:intracellular signal transduction"/>
    <property type="evidence" value="ECO:0000318"/>
    <property type="project" value="GO_Central"/>
</dbReference>
<dbReference type="GO" id="GO:0042771">
    <property type="term" value="P:intrinsic apoptotic signaling pathway in response to DNA damage by p53 class mediator"/>
    <property type="evidence" value="ECO:0000316"/>
    <property type="project" value="FlyBase"/>
</dbReference>
<dbReference type="GO" id="GO:0002011">
    <property type="term" value="P:morphogenesis of an epithelial sheet"/>
    <property type="evidence" value="ECO:0000315"/>
    <property type="project" value="FlyBase"/>
</dbReference>
<dbReference type="GO" id="GO:0090090">
    <property type="term" value="P:negative regulation of canonical Wnt signaling pathway"/>
    <property type="evidence" value="ECO:0000315"/>
    <property type="project" value="BHF-UCL"/>
</dbReference>
<dbReference type="GO" id="GO:0008285">
    <property type="term" value="P:negative regulation of cell population proliferation"/>
    <property type="evidence" value="ECO:0000315"/>
    <property type="project" value="UniProtKB"/>
</dbReference>
<dbReference type="GO" id="GO:0060253">
    <property type="term" value="P:negative regulation of glial cell proliferation"/>
    <property type="evidence" value="ECO:0000315"/>
    <property type="project" value="FlyBase"/>
</dbReference>
<dbReference type="GO" id="GO:0007406">
    <property type="term" value="P:negative regulation of neuroblast proliferation"/>
    <property type="evidence" value="ECO:0000315"/>
    <property type="project" value="FlyBase"/>
</dbReference>
<dbReference type="GO" id="GO:0043524">
    <property type="term" value="P:negative regulation of neuron apoptotic process"/>
    <property type="evidence" value="ECO:0000315"/>
    <property type="project" value="FlyBase"/>
</dbReference>
<dbReference type="GO" id="GO:2000059">
    <property type="term" value="P:negative regulation of ubiquitin-dependent protein catabolic process"/>
    <property type="evidence" value="ECO:0000315"/>
    <property type="project" value="FlyBase"/>
</dbReference>
<dbReference type="GO" id="GO:0035265">
    <property type="term" value="P:organ growth"/>
    <property type="evidence" value="ECO:0000314"/>
    <property type="project" value="FlyBase"/>
</dbReference>
<dbReference type="GO" id="GO:0043065">
    <property type="term" value="P:positive regulation of apoptotic process"/>
    <property type="evidence" value="ECO:0000315"/>
    <property type="project" value="UniProtKB"/>
</dbReference>
<dbReference type="GO" id="GO:1901526">
    <property type="term" value="P:positive regulation of mitophagy"/>
    <property type="evidence" value="ECO:0000315"/>
    <property type="project" value="FlyBase"/>
</dbReference>
<dbReference type="GO" id="GO:0031648">
    <property type="term" value="P:protein destabilization"/>
    <property type="evidence" value="ECO:0000314"/>
    <property type="project" value="FlyBase"/>
</dbReference>
<dbReference type="GO" id="GO:0006468">
    <property type="term" value="P:protein phosphorylation"/>
    <property type="evidence" value="ECO:0000314"/>
    <property type="project" value="UniProtKB"/>
</dbReference>
<dbReference type="GO" id="GO:0051262">
    <property type="term" value="P:protein tetramerization"/>
    <property type="evidence" value="ECO:0007669"/>
    <property type="project" value="InterPro"/>
</dbReference>
<dbReference type="GO" id="GO:0045464">
    <property type="term" value="P:R8 cell fate specification"/>
    <property type="evidence" value="ECO:0000315"/>
    <property type="project" value="FlyBase"/>
</dbReference>
<dbReference type="GO" id="GO:2001233">
    <property type="term" value="P:regulation of apoptotic signaling pathway"/>
    <property type="evidence" value="ECO:0000315"/>
    <property type="project" value="FlyBase"/>
</dbReference>
<dbReference type="GO" id="GO:0042127">
    <property type="term" value="P:regulation of cell population proliferation"/>
    <property type="evidence" value="ECO:0000315"/>
    <property type="project" value="FlyBase"/>
</dbReference>
<dbReference type="GO" id="GO:0043408">
    <property type="term" value="P:regulation of MAPK cascade"/>
    <property type="evidence" value="ECO:0000318"/>
    <property type="project" value="GO_Central"/>
</dbReference>
<dbReference type="GO" id="GO:0070613">
    <property type="term" value="P:regulation of protein processing"/>
    <property type="evidence" value="ECO:0000314"/>
    <property type="project" value="FlyBase"/>
</dbReference>
<dbReference type="GO" id="GO:0010212">
    <property type="term" value="P:response to ionizing radiation"/>
    <property type="evidence" value="ECO:0000315"/>
    <property type="project" value="FlyBase"/>
</dbReference>
<dbReference type="GO" id="GO:0046666">
    <property type="term" value="P:retinal cell programmed cell death"/>
    <property type="evidence" value="ECO:0000315"/>
    <property type="project" value="FlyBase"/>
</dbReference>
<dbReference type="GO" id="GO:0072089">
    <property type="term" value="P:stem cell proliferation"/>
    <property type="evidence" value="ECO:0000314"/>
    <property type="project" value="FlyBase"/>
</dbReference>
<dbReference type="CDD" id="cd21889">
    <property type="entry name" value="SARAH_Hpo"/>
    <property type="match status" value="1"/>
</dbReference>
<dbReference type="CDD" id="cd06612">
    <property type="entry name" value="STKc_MST1_2"/>
    <property type="match status" value="1"/>
</dbReference>
<dbReference type="FunFam" id="3.30.200.20:FF:000040">
    <property type="entry name" value="Dual specificity mitogen-activated protein kinase kinase"/>
    <property type="match status" value="1"/>
</dbReference>
<dbReference type="FunFam" id="1.10.510.10:FF:000075">
    <property type="entry name" value="Serine/threonine-protein kinase 3"/>
    <property type="match status" value="1"/>
</dbReference>
<dbReference type="FunFam" id="4.10.170.10:FF:000002">
    <property type="entry name" value="serine/threonine-protein kinase 3"/>
    <property type="match status" value="1"/>
</dbReference>
<dbReference type="Gene3D" id="4.10.170.10">
    <property type="entry name" value="p53-like tetramerisation domain"/>
    <property type="match status" value="1"/>
</dbReference>
<dbReference type="Gene3D" id="1.10.510.10">
    <property type="entry name" value="Transferase(Phosphotransferase) domain 1"/>
    <property type="match status" value="1"/>
</dbReference>
<dbReference type="InterPro" id="IPR011009">
    <property type="entry name" value="Kinase-like_dom_sf"/>
</dbReference>
<dbReference type="InterPro" id="IPR024205">
    <property type="entry name" value="Mst1_2_SARAH_domain"/>
</dbReference>
<dbReference type="InterPro" id="IPR036674">
    <property type="entry name" value="p53_tetramer_sf"/>
</dbReference>
<dbReference type="InterPro" id="IPR000719">
    <property type="entry name" value="Prot_kinase_dom"/>
</dbReference>
<dbReference type="InterPro" id="IPR017441">
    <property type="entry name" value="Protein_kinase_ATP_BS"/>
</dbReference>
<dbReference type="InterPro" id="IPR011524">
    <property type="entry name" value="SARAH_dom"/>
</dbReference>
<dbReference type="InterPro" id="IPR050629">
    <property type="entry name" value="STE20/SPS1-PAK"/>
</dbReference>
<dbReference type="PANTHER" id="PTHR48012:SF2">
    <property type="entry name" value="STERILE20-LIKE KINASE, ISOFORM B"/>
    <property type="match status" value="1"/>
</dbReference>
<dbReference type="PANTHER" id="PTHR48012">
    <property type="entry name" value="STERILE20-LIKE KINASE, ISOFORM B-RELATED"/>
    <property type="match status" value="1"/>
</dbReference>
<dbReference type="Pfam" id="PF11629">
    <property type="entry name" value="Mst1_SARAH"/>
    <property type="match status" value="1"/>
</dbReference>
<dbReference type="Pfam" id="PF00069">
    <property type="entry name" value="Pkinase"/>
    <property type="match status" value="1"/>
</dbReference>
<dbReference type="SMART" id="SM00220">
    <property type="entry name" value="S_TKc"/>
    <property type="match status" value="1"/>
</dbReference>
<dbReference type="SUPFAM" id="SSF56112">
    <property type="entry name" value="Protein kinase-like (PK-like)"/>
    <property type="match status" value="1"/>
</dbReference>
<dbReference type="PROSITE" id="PS00107">
    <property type="entry name" value="PROTEIN_KINASE_ATP"/>
    <property type="match status" value="1"/>
</dbReference>
<dbReference type="PROSITE" id="PS50011">
    <property type="entry name" value="PROTEIN_KINASE_DOM"/>
    <property type="match status" value="1"/>
</dbReference>
<dbReference type="PROSITE" id="PS50951">
    <property type="entry name" value="SARAH"/>
    <property type="match status" value="1"/>
</dbReference>
<sequence length="669" mass="75110">MSEPEVTSVVDMKSPNISSSCSFFKLKKLSEESLLQPPEKVFDIMYKLGEGSYGSVYKAVHKESSSIVAIKLVPVESDLHEIIKEISIMQQCDSPYVVRYYGSYFKQYDLWICMEYCGAGSVSDIMRLRKKTLTEDEIATILSDTLQGLVYLHLRRKIHRDIKAANILLNTEGYAKLADFGVAGQLTDTMAKRNTVIGTPFWMAPEVIEEIGYDCVADIWSLGITALEMAEGKPPYGEIHPMRAIFMIPQKPPPSFREPDRWSTEFIDFVSKCLVKEPDDRATATELLEHEFIRNAKHRSILKPMLEETCAIREQQRANRSFGGVLAASQAKSLATQENGMQQHITDNAFMEDPGTLVPEKFGEYQQSSASDATMIAHAEQGVDEGTLGPGGLRNLSKAAAPAAASSAASPLDMPAVDSGTMVELESNLGTMVINSDSDDSTTAKNNDDQKPRNRYRPQFLEHFDRKNAGDGRGDEKPIATEYSPAAAEQQQQQQQQQQQQQQDEQHLASGANDLNNWEHNMEMQFQQISAINQYGLQQHQQQQQVLMAYPLMNEQLIALNNQPNLLLSNAAPMGQQGIPAAAPAQPPPAYQNQHMHTQSHAYVEGEFEFLKFLTFDDLNQRLCNIDHEMELEIEQLNKKYNAKRQPIVDAMNAKRKRQQNINNNLIKI</sequence>
<feature type="chain" id="PRO_0000086001" description="Serine/threonine-protein kinase hippo">
    <location>
        <begin position="1"/>
        <end position="669"/>
    </location>
</feature>
<feature type="domain" description="Protein kinase" evidence="1">
    <location>
        <begin position="42"/>
        <end position="293"/>
    </location>
</feature>
<feature type="domain" description="SARAH" evidence="2">
    <location>
        <begin position="608"/>
        <end position="655"/>
    </location>
</feature>
<feature type="region of interest" description="Disordered" evidence="3">
    <location>
        <begin position="432"/>
        <end position="508"/>
    </location>
</feature>
<feature type="compositionally biased region" description="Polar residues" evidence="3">
    <location>
        <begin position="432"/>
        <end position="445"/>
    </location>
</feature>
<feature type="compositionally biased region" description="Basic and acidic residues" evidence="3">
    <location>
        <begin position="460"/>
        <end position="479"/>
    </location>
</feature>
<feature type="compositionally biased region" description="Low complexity" evidence="3">
    <location>
        <begin position="490"/>
        <end position="503"/>
    </location>
</feature>
<feature type="active site" description="Proton acceptor" evidence="1">
    <location>
        <position position="161"/>
    </location>
</feature>
<feature type="binding site" evidence="1">
    <location>
        <begin position="48"/>
        <end position="56"/>
    </location>
    <ligand>
        <name>ATP</name>
        <dbReference type="ChEBI" id="CHEBI:30616"/>
    </ligand>
</feature>
<feature type="binding site" evidence="1">
    <location>
        <position position="71"/>
    </location>
    <ligand>
        <name>ATP</name>
        <dbReference type="ChEBI" id="CHEBI:30616"/>
    </ligand>
</feature>
<feature type="modified residue" description="Phosphoserine" evidence="11">
    <location>
        <position position="30"/>
    </location>
</feature>
<feature type="modified residue" description="Phosphoserine" evidence="11">
    <location>
        <position position="33"/>
    </location>
</feature>
<feature type="modified residue" description="Phosphothreonine; by Tao" evidence="13">
    <location>
        <position position="195"/>
    </location>
</feature>
<feature type="mutagenesis site" description="Abolishes phosphorylation of Sav." evidence="6">
    <original>K</original>
    <variation>R</variation>
    <location>
        <position position="71"/>
    </location>
</feature>
<feature type="mutagenesis site" description="In hpo42-47; null mutant.">
    <location>
        <begin position="166"/>
        <end position="171"/>
    </location>
</feature>
<feature type="mutagenesis site" description="Abolishes phosphorylation by Tao." evidence="13">
    <original>T</original>
    <variation>A</variation>
    <location>
        <position position="195"/>
    </location>
</feature>
<feature type="sequence conflict" description="In Ref. 1; no nucleotide entry." evidence="15" ref="1">
    <original>Q</original>
    <variation>QQQQ</variation>
    <location>
        <position position="503"/>
    </location>
</feature>
<feature type="helix" evidence="16">
    <location>
        <begin position="609"/>
        <end position="613"/>
    </location>
</feature>
<feature type="helix" evidence="16">
    <location>
        <begin position="616"/>
        <end position="658"/>
    </location>
</feature>
<proteinExistence type="evidence at protein level"/>
<gene>
    <name type="primary">hpo</name>
    <name type="ORF">CG11228</name>
</gene>